<evidence type="ECO:0000255" key="1">
    <source>
        <dbReference type="HAMAP-Rule" id="MF_00050"/>
    </source>
</evidence>
<proteinExistence type="inferred from homology"/>
<gene>
    <name evidence="1" type="primary">tsf</name>
    <name type="ordered locus">FRAAL5779</name>
</gene>
<keyword id="KW-0963">Cytoplasm</keyword>
<keyword id="KW-0251">Elongation factor</keyword>
<keyword id="KW-0648">Protein biosynthesis</keyword>
<keyword id="KW-1185">Reference proteome</keyword>
<name>EFTS_FRAAA</name>
<sequence length="204" mass="22382">MADITAADIRKLRELTGAGMSDVKKALVDNDGDVEKAKSWLREKGKAQVAKRAARSAANGLVESYLHRTDPQLPPTLGVLVELRCETDFVAKTDDFKQLARDLAQHIAAADPLYVTADQIPNEVLEAERKIYEAAAREEGKPEQAITKIVEGKVNGYVKSSVLLDQPWVKDGKVTIRALLDQAGASLGEKIEVGRFSRFNIRQA</sequence>
<accession>Q0RDQ5</accession>
<reference key="1">
    <citation type="journal article" date="2007" name="Genome Res.">
        <title>Genome characteristics of facultatively symbiotic Frankia sp. strains reflect host range and host plant biogeography.</title>
        <authorList>
            <person name="Normand P."/>
            <person name="Lapierre P."/>
            <person name="Tisa L.S."/>
            <person name="Gogarten J.P."/>
            <person name="Alloisio N."/>
            <person name="Bagnarol E."/>
            <person name="Bassi C.A."/>
            <person name="Berry A.M."/>
            <person name="Bickhart D.M."/>
            <person name="Choisne N."/>
            <person name="Couloux A."/>
            <person name="Cournoyer B."/>
            <person name="Cruveiller S."/>
            <person name="Daubin V."/>
            <person name="Demange N."/>
            <person name="Francino M.P."/>
            <person name="Goltsman E."/>
            <person name="Huang Y."/>
            <person name="Kopp O.R."/>
            <person name="Labarre L."/>
            <person name="Lapidus A."/>
            <person name="Lavire C."/>
            <person name="Marechal J."/>
            <person name="Martinez M."/>
            <person name="Mastronunzio J.E."/>
            <person name="Mullin B.C."/>
            <person name="Niemann J."/>
            <person name="Pujic P."/>
            <person name="Rawnsley T."/>
            <person name="Rouy Z."/>
            <person name="Schenowitz C."/>
            <person name="Sellstedt A."/>
            <person name="Tavares F."/>
            <person name="Tomkins J.P."/>
            <person name="Vallenet D."/>
            <person name="Valverde C."/>
            <person name="Wall L.G."/>
            <person name="Wang Y."/>
            <person name="Medigue C."/>
            <person name="Benson D.R."/>
        </authorList>
    </citation>
    <scope>NUCLEOTIDE SEQUENCE [LARGE SCALE GENOMIC DNA]</scope>
    <source>
        <strain>DSM 45986 / CECT 9034 / ACN14a</strain>
    </source>
</reference>
<comment type="function">
    <text evidence="1">Associates with the EF-Tu.GDP complex and induces the exchange of GDP to GTP. It remains bound to the aminoacyl-tRNA.EF-Tu.GTP complex up to the GTP hydrolysis stage on the ribosome.</text>
</comment>
<comment type="subcellular location">
    <subcellularLocation>
        <location evidence="1">Cytoplasm</location>
    </subcellularLocation>
</comment>
<comment type="similarity">
    <text evidence="1">Belongs to the EF-Ts family.</text>
</comment>
<dbReference type="EMBL" id="CT573213">
    <property type="protein sequence ID" value="CAJ64411.1"/>
    <property type="molecule type" value="Genomic_DNA"/>
</dbReference>
<dbReference type="RefSeq" id="WP_011606851.1">
    <property type="nucleotide sequence ID" value="NC_008278.1"/>
</dbReference>
<dbReference type="SMR" id="Q0RDQ5"/>
<dbReference type="STRING" id="326424.FRAAL5779"/>
<dbReference type="KEGG" id="fal:FRAAL5779"/>
<dbReference type="eggNOG" id="COG0264">
    <property type="taxonomic scope" value="Bacteria"/>
</dbReference>
<dbReference type="HOGENOM" id="CLU_047155_1_1_11"/>
<dbReference type="OrthoDB" id="9808348at2"/>
<dbReference type="Proteomes" id="UP000000657">
    <property type="component" value="Chromosome"/>
</dbReference>
<dbReference type="GO" id="GO:0005737">
    <property type="term" value="C:cytoplasm"/>
    <property type="evidence" value="ECO:0007669"/>
    <property type="project" value="UniProtKB-SubCell"/>
</dbReference>
<dbReference type="GO" id="GO:0003746">
    <property type="term" value="F:translation elongation factor activity"/>
    <property type="evidence" value="ECO:0007669"/>
    <property type="project" value="UniProtKB-UniRule"/>
</dbReference>
<dbReference type="CDD" id="cd14275">
    <property type="entry name" value="UBA_EF-Ts"/>
    <property type="match status" value="1"/>
</dbReference>
<dbReference type="FunFam" id="1.10.286.20:FF:000001">
    <property type="entry name" value="Elongation factor Ts"/>
    <property type="match status" value="1"/>
</dbReference>
<dbReference type="FunFam" id="1.10.8.10:FF:000001">
    <property type="entry name" value="Elongation factor Ts"/>
    <property type="match status" value="1"/>
</dbReference>
<dbReference type="Gene3D" id="1.10.286.20">
    <property type="match status" value="1"/>
</dbReference>
<dbReference type="Gene3D" id="1.10.8.10">
    <property type="entry name" value="DNA helicase RuvA subunit, C-terminal domain"/>
    <property type="match status" value="1"/>
</dbReference>
<dbReference type="Gene3D" id="3.30.479.20">
    <property type="entry name" value="Elongation factor Ts, dimerisation domain"/>
    <property type="match status" value="1"/>
</dbReference>
<dbReference type="HAMAP" id="MF_00050">
    <property type="entry name" value="EF_Ts"/>
    <property type="match status" value="1"/>
</dbReference>
<dbReference type="InterPro" id="IPR036402">
    <property type="entry name" value="EF-Ts_dimer_sf"/>
</dbReference>
<dbReference type="InterPro" id="IPR001816">
    <property type="entry name" value="Transl_elong_EFTs/EF1B"/>
</dbReference>
<dbReference type="InterPro" id="IPR014039">
    <property type="entry name" value="Transl_elong_EFTs/EF1B_dimer"/>
</dbReference>
<dbReference type="InterPro" id="IPR018101">
    <property type="entry name" value="Transl_elong_Ts_CS"/>
</dbReference>
<dbReference type="InterPro" id="IPR009060">
    <property type="entry name" value="UBA-like_sf"/>
</dbReference>
<dbReference type="PANTHER" id="PTHR11741">
    <property type="entry name" value="ELONGATION FACTOR TS"/>
    <property type="match status" value="1"/>
</dbReference>
<dbReference type="PANTHER" id="PTHR11741:SF0">
    <property type="entry name" value="ELONGATION FACTOR TS, MITOCHONDRIAL"/>
    <property type="match status" value="1"/>
</dbReference>
<dbReference type="Pfam" id="PF00889">
    <property type="entry name" value="EF_TS"/>
    <property type="match status" value="2"/>
</dbReference>
<dbReference type="SUPFAM" id="SSF54713">
    <property type="entry name" value="Elongation factor Ts (EF-Ts), dimerisation domain"/>
    <property type="match status" value="1"/>
</dbReference>
<dbReference type="SUPFAM" id="SSF46934">
    <property type="entry name" value="UBA-like"/>
    <property type="match status" value="1"/>
</dbReference>
<dbReference type="PROSITE" id="PS01126">
    <property type="entry name" value="EF_TS_1"/>
    <property type="match status" value="1"/>
</dbReference>
<organism>
    <name type="scientific">Frankia alni (strain DSM 45986 / CECT 9034 / ACN14a)</name>
    <dbReference type="NCBI Taxonomy" id="326424"/>
    <lineage>
        <taxon>Bacteria</taxon>
        <taxon>Bacillati</taxon>
        <taxon>Actinomycetota</taxon>
        <taxon>Actinomycetes</taxon>
        <taxon>Frankiales</taxon>
        <taxon>Frankiaceae</taxon>
        <taxon>Frankia</taxon>
    </lineage>
</organism>
<feature type="chain" id="PRO_1000006093" description="Elongation factor Ts">
    <location>
        <begin position="1"/>
        <end position="204"/>
    </location>
</feature>
<feature type="region of interest" description="Involved in Mg(2+) ion dislocation from EF-Tu" evidence="1">
    <location>
        <begin position="87"/>
        <end position="90"/>
    </location>
</feature>
<protein>
    <recommendedName>
        <fullName evidence="1">Elongation factor Ts</fullName>
        <shortName evidence="1">EF-Ts</shortName>
    </recommendedName>
</protein>